<keyword id="KW-0903">Direct protein sequencing</keyword>
<keyword id="KW-1015">Disulfide bond</keyword>
<keyword id="KW-0960">Knottin</keyword>
<keyword id="KW-0528">Neurotoxin</keyword>
<keyword id="KW-0964">Secreted</keyword>
<keyword id="KW-0732">Signal</keyword>
<keyword id="KW-0800">Toxin</keyword>
<name>LTX1A_LACTA</name>
<proteinExistence type="evidence at protein level"/>
<comment type="function">
    <text evidence="3">Insect toxin. Causes paralysis in larvae of C.vicina by depolarizing membranes at the neuromuscular junction.</text>
</comment>
<comment type="subcellular location">
    <subcellularLocation>
        <location evidence="3 4">Secreted</location>
    </subcellularLocation>
</comment>
<comment type="tissue specificity">
    <text evidence="8">Expressed by the venom gland.</text>
</comment>
<comment type="domain">
    <text evidence="3">The C-terminal part (65-85) forms an alpha-helix which probably disrupts target membranes.</text>
</comment>
<comment type="domain">
    <text evidence="3 7">The presence of a 'disulfide through disulfide knot' structurally defines this protein as a knottin.</text>
</comment>
<comment type="PTM">
    <text evidence="3">Contains 4 disulfide bonds.</text>
</comment>
<comment type="PTM">
    <text evidence="6">Cleavage of the propeptide depends on the processing quadruplet motif (XXXR, with at least one of X being E).</text>
</comment>
<comment type="mass spectrometry" mass="6569.7" error="0.5" method="MALDI" evidence="3"/>
<comment type="mass spectrometry" mass="6570.3" method="MALDI" evidence="4"/>
<comment type="toxic dose">
    <text evidence="3">LD(50) is 45 ug/g in flesh fly larvae (S.carnaria).</text>
</comment>
<comment type="toxic dose">
    <text evidence="3">LD(50) is 50 ug/g in house crickets (Acheta domesticus).</text>
</comment>
<comment type="similarity">
    <text evidence="2">Belongs to the neurotoxin 19 (CSTX) family.</text>
</comment>
<sequence length="85" mass="9293">MKVLVFAIVCSVLLQVVLSADEEARECIPTKHDCTNDRKNCCPGHECKCYNTQIGGSKKEQCGCKKSLLAKAKNFGGKVITIFKA</sequence>
<reference key="1">
    <citation type="journal article" date="2013" name="Biochim. Biophys. Acta">
        <title>Cysteine-rich toxins from Lachesana tarabaevi spider venom with amphiphilic C-terminal segments.</title>
        <authorList>
            <person name="Kuzmenkov A.I."/>
            <person name="Fedorova I.M."/>
            <person name="Vassilevski A.A."/>
            <person name="Grishin E.V."/>
        </authorList>
    </citation>
    <scope>NUCLEOTIDE SEQUENCE [MRNA]</scope>
    <scope>PROTEIN SEQUENCE OF 26-85</scope>
    <scope>FUNCTION</scope>
    <scope>SUBCELLULAR LOCATION</scope>
    <scope>DOMAIN</scope>
    <scope>DISULFIDE BONDS</scope>
    <scope>MASS SPECTROMETRY</scope>
    <scope>TOXIC DOSE</scope>
    <source>
        <tissue>Venom</tissue>
        <tissue>Venom gland</tissue>
    </source>
</reference>
<reference key="2">
    <citation type="journal article" date="2016" name="Biochem. J.">
        <title>Lachesana tarabaevi, an expert in membrane-active toxins.</title>
        <authorList>
            <person name="Kuzmenkov A.I."/>
            <person name="Sachkova M.Y."/>
            <person name="Kovalchuk S.I."/>
            <person name="Grishin E.V."/>
            <person name="Vassilevski A.A."/>
        </authorList>
    </citation>
    <scope>SUBCELLULAR LOCATION</scope>
    <scope>PQM MOTIF</scope>
    <scope>MASS SPECTROMETRY</scope>
    <source>
        <tissue>Venom</tissue>
    </source>
</reference>
<feature type="signal peptide" evidence="2">
    <location>
        <begin position="1"/>
        <end position="19"/>
    </location>
</feature>
<feature type="propeptide" id="PRO_0000421841" description="Removed in mature form" evidence="3">
    <location>
        <begin position="20"/>
        <end position="25"/>
    </location>
</feature>
<feature type="peptide" id="PRO_0000421842" description="Latartoxin-1a">
    <location>
        <begin position="26"/>
        <end position="85"/>
    </location>
</feature>
<feature type="short sequence motif" description="Processing quadruplet motif" evidence="6">
    <location>
        <begin position="22"/>
        <end position="25"/>
    </location>
</feature>
<feature type="disulfide bond" evidence="1">
    <location>
        <begin position="27"/>
        <end position="42"/>
    </location>
</feature>
<feature type="disulfide bond" evidence="1">
    <location>
        <begin position="34"/>
        <end position="47"/>
    </location>
</feature>
<feature type="disulfide bond" evidence="1">
    <location>
        <begin position="41"/>
        <end position="64"/>
    </location>
</feature>
<feature type="disulfide bond" evidence="1">
    <location>
        <begin position="49"/>
        <end position="62"/>
    </location>
</feature>
<protein>
    <recommendedName>
        <fullName evidence="5">Latartoxin-1a</fullName>
        <shortName evidence="5">LtTx-1a</shortName>
    </recommendedName>
</protein>
<accession>B3EWF2</accession>
<accession>K7WU35</accession>
<evidence type="ECO:0000250" key="1">
    <source>
        <dbReference type="UniProtKB" id="P58604"/>
    </source>
</evidence>
<evidence type="ECO:0000255" key="2"/>
<evidence type="ECO:0000269" key="3">
    <source>
    </source>
</evidence>
<evidence type="ECO:0000269" key="4">
    <source>
    </source>
</evidence>
<evidence type="ECO:0000303" key="5">
    <source>
    </source>
</evidence>
<evidence type="ECO:0000303" key="6">
    <source>
    </source>
</evidence>
<evidence type="ECO:0000305" key="7"/>
<evidence type="ECO:0000305" key="8">
    <source>
    </source>
</evidence>
<dbReference type="EMBL" id="JQ513641">
    <property type="protein sequence ID" value="AFX65326.1"/>
    <property type="molecule type" value="mRNA"/>
</dbReference>
<dbReference type="EMBL" id="JQ513642">
    <property type="protein sequence ID" value="AFX65327.1"/>
    <property type="molecule type" value="mRNA"/>
</dbReference>
<dbReference type="SMR" id="B3EWF2"/>
<dbReference type="ArachnoServer" id="AS001847">
    <property type="toxin name" value="U1-zodatoxin-Lt1a"/>
</dbReference>
<dbReference type="GO" id="GO:0005576">
    <property type="term" value="C:extracellular region"/>
    <property type="evidence" value="ECO:0007669"/>
    <property type="project" value="UniProtKB-SubCell"/>
</dbReference>
<dbReference type="GO" id="GO:0090729">
    <property type="term" value="F:toxin activity"/>
    <property type="evidence" value="ECO:0007669"/>
    <property type="project" value="UniProtKB-KW"/>
</dbReference>
<dbReference type="InterPro" id="IPR019553">
    <property type="entry name" value="Spider_toxin_CSTX_knottin"/>
</dbReference>
<dbReference type="Pfam" id="PF10530">
    <property type="entry name" value="Toxin_35"/>
    <property type="match status" value="1"/>
</dbReference>
<organism>
    <name type="scientific">Lachesana tarabaevi</name>
    <name type="common">Spider</name>
    <dbReference type="NCBI Taxonomy" id="379576"/>
    <lineage>
        <taxon>Eukaryota</taxon>
        <taxon>Metazoa</taxon>
        <taxon>Ecdysozoa</taxon>
        <taxon>Arthropoda</taxon>
        <taxon>Chelicerata</taxon>
        <taxon>Arachnida</taxon>
        <taxon>Araneae</taxon>
        <taxon>Araneomorphae</taxon>
        <taxon>Entelegynae</taxon>
        <taxon>Entelegynae incertae sedis</taxon>
        <taxon>Zodariidae</taxon>
        <taxon>Lachesana</taxon>
    </lineage>
</organism>